<accession>P47692</accession>
<comment type="similarity">
    <text evidence="1">Belongs to the OsmC/Ohr family.</text>
</comment>
<comment type="sequence caution" evidence="1">
    <conflict type="erroneous initiation">
        <sequence resource="EMBL-CDS" id="AAC72474"/>
    </conflict>
</comment>
<organism>
    <name type="scientific">Mycoplasma genitalium (strain ATCC 33530 / DSM 19775 / NCTC 10195 / G37)</name>
    <name type="common">Mycoplasmoides genitalium</name>
    <dbReference type="NCBI Taxonomy" id="243273"/>
    <lineage>
        <taxon>Bacteria</taxon>
        <taxon>Bacillati</taxon>
        <taxon>Mycoplasmatota</taxon>
        <taxon>Mycoplasmoidales</taxon>
        <taxon>Mycoplasmoidaceae</taxon>
        <taxon>Mycoplasmoides</taxon>
    </lineage>
</organism>
<keyword id="KW-1185">Reference proteome</keyword>
<sequence>MALIYKTVAQTETGREGSVKTLDGFQTKLSFPKPDLSVQTENNPEQLFASAYASCFSQAVIVVMQQHQFSFSKKPVVSVKVELHQENGLFHIKAGVELTTNSNDQEVGKKLIQKAHEMCPFSRLIRNENFLGLTLNGIKL</sequence>
<proteinExistence type="inferred from homology"/>
<feature type="chain" id="PRO_0000172731" description="Organic hydroperoxide resistance protein-like">
    <location>
        <begin position="1"/>
        <end position="140"/>
    </location>
</feature>
<gene>
    <name type="ordered locus">MG454</name>
</gene>
<name>OHRL_MYCGE</name>
<evidence type="ECO:0000305" key="1"/>
<protein>
    <recommendedName>
        <fullName>Organic hydroperoxide resistance protein-like</fullName>
    </recommendedName>
</protein>
<reference key="1">
    <citation type="journal article" date="1995" name="Science">
        <title>The minimal gene complement of Mycoplasma genitalium.</title>
        <authorList>
            <person name="Fraser C.M."/>
            <person name="Gocayne J.D."/>
            <person name="White O."/>
            <person name="Adams M.D."/>
            <person name="Clayton R.A."/>
            <person name="Fleischmann R.D."/>
            <person name="Bult C.J."/>
            <person name="Kerlavage A.R."/>
            <person name="Sutton G.G."/>
            <person name="Kelley J.M."/>
            <person name="Fritchman J.L."/>
            <person name="Weidman J.F."/>
            <person name="Small K.V."/>
            <person name="Sandusky M."/>
            <person name="Fuhrmann J.L."/>
            <person name="Nguyen D.T."/>
            <person name="Utterback T.R."/>
            <person name="Saudek D.M."/>
            <person name="Phillips C.A."/>
            <person name="Merrick J.M."/>
            <person name="Tomb J.-F."/>
            <person name="Dougherty B.A."/>
            <person name="Bott K.F."/>
            <person name="Hu P.-C."/>
            <person name="Lucier T.S."/>
            <person name="Peterson S.N."/>
            <person name="Smith H.O."/>
            <person name="Hutchison C.A. III"/>
            <person name="Venter J.C."/>
        </authorList>
    </citation>
    <scope>NUCLEOTIDE SEQUENCE [LARGE SCALE GENOMIC DNA]</scope>
    <source>
        <strain>ATCC 33530 / DSM 19775 / NCTC 10195 / G37</strain>
    </source>
</reference>
<dbReference type="EMBL" id="L43967">
    <property type="protein sequence ID" value="AAC72474.1"/>
    <property type="status" value="ALT_INIT"/>
    <property type="molecule type" value="Genomic_DNA"/>
</dbReference>
<dbReference type="PIR" id="B64250">
    <property type="entry name" value="B64250"/>
</dbReference>
<dbReference type="RefSeq" id="WP_041361276.1">
    <property type="nucleotide sequence ID" value="NC_000908.2"/>
</dbReference>
<dbReference type="SMR" id="P47692"/>
<dbReference type="FunCoup" id="P47692">
    <property type="interactions" value="20"/>
</dbReference>
<dbReference type="STRING" id="243273.MG_454"/>
<dbReference type="GeneID" id="88282634"/>
<dbReference type="KEGG" id="mge:MG_454"/>
<dbReference type="eggNOG" id="COG1764">
    <property type="taxonomic scope" value="Bacteria"/>
</dbReference>
<dbReference type="HOGENOM" id="CLU_106355_2_1_14"/>
<dbReference type="InParanoid" id="P47692"/>
<dbReference type="OrthoDB" id="9797508at2"/>
<dbReference type="BioCyc" id="MGEN243273:G1GJ2-547-MONOMER"/>
<dbReference type="Proteomes" id="UP000000807">
    <property type="component" value="Chromosome"/>
</dbReference>
<dbReference type="GO" id="GO:0006979">
    <property type="term" value="P:response to oxidative stress"/>
    <property type="evidence" value="ECO:0007669"/>
    <property type="project" value="InterPro"/>
</dbReference>
<dbReference type="Gene3D" id="3.30.300.20">
    <property type="match status" value="1"/>
</dbReference>
<dbReference type="InterPro" id="IPR015946">
    <property type="entry name" value="KH_dom-like_a/b"/>
</dbReference>
<dbReference type="InterPro" id="IPR019953">
    <property type="entry name" value="OHR"/>
</dbReference>
<dbReference type="InterPro" id="IPR003718">
    <property type="entry name" value="OsmC/Ohr_fam"/>
</dbReference>
<dbReference type="InterPro" id="IPR036102">
    <property type="entry name" value="OsmC/Ohrsf"/>
</dbReference>
<dbReference type="NCBIfam" id="TIGR03561">
    <property type="entry name" value="organ_hyd_perox"/>
    <property type="match status" value="1"/>
</dbReference>
<dbReference type="PANTHER" id="PTHR33797">
    <property type="entry name" value="ORGANIC HYDROPEROXIDE RESISTANCE PROTEIN-LIKE"/>
    <property type="match status" value="1"/>
</dbReference>
<dbReference type="PANTHER" id="PTHR33797:SF2">
    <property type="entry name" value="ORGANIC HYDROPEROXIDE RESISTANCE PROTEIN-LIKE"/>
    <property type="match status" value="1"/>
</dbReference>
<dbReference type="Pfam" id="PF02566">
    <property type="entry name" value="OsmC"/>
    <property type="match status" value="1"/>
</dbReference>
<dbReference type="SUPFAM" id="SSF82784">
    <property type="entry name" value="OsmC-like"/>
    <property type="match status" value="1"/>
</dbReference>